<name>DEF_MYCMM</name>
<evidence type="ECO:0000255" key="1">
    <source>
        <dbReference type="HAMAP-Rule" id="MF_00163"/>
    </source>
</evidence>
<dbReference type="EC" id="3.5.1.88" evidence="1"/>
<dbReference type="EMBL" id="CP000854">
    <property type="protein sequence ID" value="ACC39204.1"/>
    <property type="molecule type" value="Genomic_DNA"/>
</dbReference>
<dbReference type="RefSeq" id="WP_012392692.1">
    <property type="nucleotide sequence ID" value="NC_010612.1"/>
</dbReference>
<dbReference type="SMR" id="B2HQN4"/>
<dbReference type="STRING" id="216594.MMAR_0744"/>
<dbReference type="GeneID" id="34340196"/>
<dbReference type="KEGG" id="mmi:MMAR_0744"/>
<dbReference type="eggNOG" id="COG0242">
    <property type="taxonomic scope" value="Bacteria"/>
</dbReference>
<dbReference type="HOGENOM" id="CLU_061901_1_2_11"/>
<dbReference type="OrthoDB" id="9804313at2"/>
<dbReference type="Proteomes" id="UP000001190">
    <property type="component" value="Chromosome"/>
</dbReference>
<dbReference type="GO" id="GO:0046872">
    <property type="term" value="F:metal ion binding"/>
    <property type="evidence" value="ECO:0007669"/>
    <property type="project" value="UniProtKB-KW"/>
</dbReference>
<dbReference type="GO" id="GO:0042586">
    <property type="term" value="F:peptide deformylase activity"/>
    <property type="evidence" value="ECO:0007669"/>
    <property type="project" value="UniProtKB-UniRule"/>
</dbReference>
<dbReference type="GO" id="GO:0043686">
    <property type="term" value="P:co-translational protein modification"/>
    <property type="evidence" value="ECO:0007669"/>
    <property type="project" value="TreeGrafter"/>
</dbReference>
<dbReference type="GO" id="GO:0006412">
    <property type="term" value="P:translation"/>
    <property type="evidence" value="ECO:0007669"/>
    <property type="project" value="UniProtKB-UniRule"/>
</dbReference>
<dbReference type="CDD" id="cd00487">
    <property type="entry name" value="Pep_deformylase"/>
    <property type="match status" value="1"/>
</dbReference>
<dbReference type="Gene3D" id="3.90.45.10">
    <property type="entry name" value="Peptide deformylase"/>
    <property type="match status" value="1"/>
</dbReference>
<dbReference type="HAMAP" id="MF_00163">
    <property type="entry name" value="Pep_deformylase"/>
    <property type="match status" value="1"/>
</dbReference>
<dbReference type="InterPro" id="IPR023635">
    <property type="entry name" value="Peptide_deformylase"/>
</dbReference>
<dbReference type="InterPro" id="IPR036821">
    <property type="entry name" value="Peptide_deformylase_sf"/>
</dbReference>
<dbReference type="NCBIfam" id="NF001159">
    <property type="entry name" value="PRK00150.1-3"/>
    <property type="match status" value="1"/>
</dbReference>
<dbReference type="NCBIfam" id="NF009483">
    <property type="entry name" value="PRK12846.1-4"/>
    <property type="match status" value="1"/>
</dbReference>
<dbReference type="PANTHER" id="PTHR10458">
    <property type="entry name" value="PEPTIDE DEFORMYLASE"/>
    <property type="match status" value="1"/>
</dbReference>
<dbReference type="PANTHER" id="PTHR10458:SF2">
    <property type="entry name" value="PEPTIDE DEFORMYLASE, MITOCHONDRIAL"/>
    <property type="match status" value="1"/>
</dbReference>
<dbReference type="Pfam" id="PF01327">
    <property type="entry name" value="Pep_deformylase"/>
    <property type="match status" value="1"/>
</dbReference>
<dbReference type="PIRSF" id="PIRSF004749">
    <property type="entry name" value="Pep_def"/>
    <property type="match status" value="1"/>
</dbReference>
<dbReference type="PRINTS" id="PR01576">
    <property type="entry name" value="PDEFORMYLASE"/>
</dbReference>
<dbReference type="SUPFAM" id="SSF56420">
    <property type="entry name" value="Peptide deformylase"/>
    <property type="match status" value="1"/>
</dbReference>
<accession>B2HQN4</accession>
<organism>
    <name type="scientific">Mycobacterium marinum (strain ATCC BAA-535 / M)</name>
    <dbReference type="NCBI Taxonomy" id="216594"/>
    <lineage>
        <taxon>Bacteria</taxon>
        <taxon>Bacillati</taxon>
        <taxon>Actinomycetota</taxon>
        <taxon>Actinomycetes</taxon>
        <taxon>Mycobacteriales</taxon>
        <taxon>Mycobacteriaceae</taxon>
        <taxon>Mycobacterium</taxon>
        <taxon>Mycobacterium ulcerans group</taxon>
    </lineage>
</organism>
<reference key="1">
    <citation type="journal article" date="2008" name="Genome Res.">
        <title>Insights from the complete genome sequence of Mycobacterium marinum on the evolution of Mycobacterium tuberculosis.</title>
        <authorList>
            <person name="Stinear T.P."/>
            <person name="Seemann T."/>
            <person name="Harrison P.F."/>
            <person name="Jenkin G.A."/>
            <person name="Davies J.K."/>
            <person name="Johnson P.D."/>
            <person name="Abdellah Z."/>
            <person name="Arrowsmith C."/>
            <person name="Chillingworth T."/>
            <person name="Churcher C."/>
            <person name="Clarke K."/>
            <person name="Cronin A."/>
            <person name="Davis P."/>
            <person name="Goodhead I."/>
            <person name="Holroyd N."/>
            <person name="Jagels K."/>
            <person name="Lord A."/>
            <person name="Moule S."/>
            <person name="Mungall K."/>
            <person name="Norbertczak H."/>
            <person name="Quail M.A."/>
            <person name="Rabbinowitsch E."/>
            <person name="Walker D."/>
            <person name="White B."/>
            <person name="Whitehead S."/>
            <person name="Small P.L."/>
            <person name="Brosch R."/>
            <person name="Ramakrishnan L."/>
            <person name="Fischbach M.A."/>
            <person name="Parkhill J."/>
            <person name="Cole S.T."/>
        </authorList>
    </citation>
    <scope>NUCLEOTIDE SEQUENCE [LARGE SCALE GENOMIC DNA]</scope>
    <source>
        <strain>ATCC BAA-535 / M</strain>
    </source>
</reference>
<keyword id="KW-0378">Hydrolase</keyword>
<keyword id="KW-0408">Iron</keyword>
<keyword id="KW-0479">Metal-binding</keyword>
<keyword id="KW-0648">Protein biosynthesis</keyword>
<keyword id="KW-1185">Reference proteome</keyword>
<sequence length="197" mass="20925">MAVVPIRIVGDPVLHTPTSPVPVGADGSLPADLPELIATMYETMDAAHGVGLAANQIGYGLRLFVYDCADDRGKAAHRRGVVINPVLETSEIPENMPDPDNDDEGCLSVPGESFPTGRATWARVTGLDAEGNPVELEGSGLFARMLQHETGHLDGYLYLDCLIGRHARSAKRAVKSHGWGVPGLSWLPGEGPDPFGH</sequence>
<feature type="chain" id="PRO_1000097325" description="Peptide deformylase">
    <location>
        <begin position="1"/>
        <end position="197"/>
    </location>
</feature>
<feature type="active site" evidence="1">
    <location>
        <position position="149"/>
    </location>
</feature>
<feature type="binding site" evidence="1">
    <location>
        <position position="106"/>
    </location>
    <ligand>
        <name>Fe cation</name>
        <dbReference type="ChEBI" id="CHEBI:24875"/>
    </ligand>
</feature>
<feature type="binding site" evidence="1">
    <location>
        <position position="148"/>
    </location>
    <ligand>
        <name>Fe cation</name>
        <dbReference type="ChEBI" id="CHEBI:24875"/>
    </ligand>
</feature>
<feature type="binding site" evidence="1">
    <location>
        <position position="152"/>
    </location>
    <ligand>
        <name>Fe cation</name>
        <dbReference type="ChEBI" id="CHEBI:24875"/>
    </ligand>
</feature>
<comment type="function">
    <text evidence="1">Removes the formyl group from the N-terminal Met of newly synthesized proteins. Requires at least a dipeptide for an efficient rate of reaction. N-terminal L-methionine is a prerequisite for activity but the enzyme has broad specificity at other positions.</text>
</comment>
<comment type="catalytic activity">
    <reaction evidence="1">
        <text>N-terminal N-formyl-L-methionyl-[peptide] + H2O = N-terminal L-methionyl-[peptide] + formate</text>
        <dbReference type="Rhea" id="RHEA:24420"/>
        <dbReference type="Rhea" id="RHEA-COMP:10639"/>
        <dbReference type="Rhea" id="RHEA-COMP:10640"/>
        <dbReference type="ChEBI" id="CHEBI:15377"/>
        <dbReference type="ChEBI" id="CHEBI:15740"/>
        <dbReference type="ChEBI" id="CHEBI:49298"/>
        <dbReference type="ChEBI" id="CHEBI:64731"/>
        <dbReference type="EC" id="3.5.1.88"/>
    </reaction>
</comment>
<comment type="cofactor">
    <cofactor evidence="1">
        <name>Fe(2+)</name>
        <dbReference type="ChEBI" id="CHEBI:29033"/>
    </cofactor>
    <text evidence="1">Binds 1 Fe(2+) ion.</text>
</comment>
<comment type="similarity">
    <text evidence="1">Belongs to the polypeptide deformylase family.</text>
</comment>
<protein>
    <recommendedName>
        <fullName evidence="1">Peptide deformylase</fullName>
        <shortName evidence="1">PDF</shortName>
        <ecNumber evidence="1">3.5.1.88</ecNumber>
    </recommendedName>
    <alternativeName>
        <fullName evidence="1">Polypeptide deformylase</fullName>
    </alternativeName>
</protein>
<proteinExistence type="inferred from homology"/>
<gene>
    <name evidence="1" type="primary">def</name>
    <name type="ordered locus">MMAR_0744</name>
</gene>